<feature type="chain" id="PRO_0000163716" description="1-deoxy-D-xylulose 5-phosphate reductoisomerase">
    <location>
        <begin position="1"/>
        <end position="387"/>
    </location>
</feature>
<feature type="binding site" evidence="1">
    <location>
        <position position="11"/>
    </location>
    <ligand>
        <name>NADPH</name>
        <dbReference type="ChEBI" id="CHEBI:57783"/>
    </ligand>
</feature>
<feature type="binding site" evidence="1">
    <location>
        <position position="12"/>
    </location>
    <ligand>
        <name>NADPH</name>
        <dbReference type="ChEBI" id="CHEBI:57783"/>
    </ligand>
</feature>
<feature type="binding site" evidence="1">
    <location>
        <position position="13"/>
    </location>
    <ligand>
        <name>NADPH</name>
        <dbReference type="ChEBI" id="CHEBI:57783"/>
    </ligand>
</feature>
<feature type="binding site" evidence="1">
    <location>
        <position position="14"/>
    </location>
    <ligand>
        <name>NADPH</name>
        <dbReference type="ChEBI" id="CHEBI:57783"/>
    </ligand>
</feature>
<feature type="binding site" evidence="1">
    <location>
        <position position="37"/>
    </location>
    <ligand>
        <name>NADPH</name>
        <dbReference type="ChEBI" id="CHEBI:57783"/>
    </ligand>
</feature>
<feature type="binding site" evidence="1">
    <location>
        <position position="38"/>
    </location>
    <ligand>
        <name>NADPH</name>
        <dbReference type="ChEBI" id="CHEBI:57783"/>
    </ligand>
</feature>
<feature type="binding site" evidence="1">
    <location>
        <position position="39"/>
    </location>
    <ligand>
        <name>NADPH</name>
        <dbReference type="ChEBI" id="CHEBI:57783"/>
    </ligand>
</feature>
<feature type="binding site" evidence="1">
    <location>
        <position position="127"/>
    </location>
    <ligand>
        <name>NADPH</name>
        <dbReference type="ChEBI" id="CHEBI:57783"/>
    </ligand>
</feature>
<feature type="binding site" evidence="1">
    <location>
        <position position="128"/>
    </location>
    <ligand>
        <name>1-deoxy-D-xylulose 5-phosphate</name>
        <dbReference type="ChEBI" id="CHEBI:57792"/>
    </ligand>
</feature>
<feature type="binding site" evidence="1">
    <location>
        <position position="129"/>
    </location>
    <ligand>
        <name>NADPH</name>
        <dbReference type="ChEBI" id="CHEBI:57783"/>
    </ligand>
</feature>
<feature type="binding site" evidence="1">
    <location>
        <position position="153"/>
    </location>
    <ligand>
        <name>Mn(2+)</name>
        <dbReference type="ChEBI" id="CHEBI:29035"/>
    </ligand>
</feature>
<feature type="binding site" evidence="1">
    <location>
        <position position="154"/>
    </location>
    <ligand>
        <name>1-deoxy-D-xylulose 5-phosphate</name>
        <dbReference type="ChEBI" id="CHEBI:57792"/>
    </ligand>
</feature>
<feature type="binding site" evidence="1">
    <location>
        <position position="155"/>
    </location>
    <ligand>
        <name>1-deoxy-D-xylulose 5-phosphate</name>
        <dbReference type="ChEBI" id="CHEBI:57792"/>
    </ligand>
</feature>
<feature type="binding site" evidence="1">
    <location>
        <position position="155"/>
    </location>
    <ligand>
        <name>Mn(2+)</name>
        <dbReference type="ChEBI" id="CHEBI:29035"/>
    </ligand>
</feature>
<feature type="binding site" evidence="1">
    <location>
        <position position="179"/>
    </location>
    <ligand>
        <name>1-deoxy-D-xylulose 5-phosphate</name>
        <dbReference type="ChEBI" id="CHEBI:57792"/>
    </ligand>
</feature>
<feature type="binding site" evidence="1">
    <location>
        <position position="200"/>
    </location>
    <ligand>
        <name>1-deoxy-D-xylulose 5-phosphate</name>
        <dbReference type="ChEBI" id="CHEBI:57792"/>
    </ligand>
</feature>
<feature type="binding site" evidence="1">
    <location>
        <position position="206"/>
    </location>
    <ligand>
        <name>NADPH</name>
        <dbReference type="ChEBI" id="CHEBI:57783"/>
    </ligand>
</feature>
<feature type="binding site" evidence="1">
    <location>
        <position position="213"/>
    </location>
    <ligand>
        <name>1-deoxy-D-xylulose 5-phosphate</name>
        <dbReference type="ChEBI" id="CHEBI:57792"/>
    </ligand>
</feature>
<feature type="binding site" evidence="1">
    <location>
        <position position="218"/>
    </location>
    <ligand>
        <name>1-deoxy-D-xylulose 5-phosphate</name>
        <dbReference type="ChEBI" id="CHEBI:57792"/>
    </ligand>
</feature>
<feature type="binding site" evidence="1">
    <location>
        <position position="219"/>
    </location>
    <ligand>
        <name>1-deoxy-D-xylulose 5-phosphate</name>
        <dbReference type="ChEBI" id="CHEBI:57792"/>
    </ligand>
</feature>
<feature type="binding site" evidence="1">
    <location>
        <position position="222"/>
    </location>
    <ligand>
        <name>1-deoxy-D-xylulose 5-phosphate</name>
        <dbReference type="ChEBI" id="CHEBI:57792"/>
    </ligand>
</feature>
<feature type="binding site" evidence="1">
    <location>
        <position position="222"/>
    </location>
    <ligand>
        <name>Mn(2+)</name>
        <dbReference type="ChEBI" id="CHEBI:29035"/>
    </ligand>
</feature>
<name>DXR_SYMTH</name>
<proteinExistence type="inferred from homology"/>
<organism>
    <name type="scientific">Symbiobacterium thermophilum (strain DSM 24528 / JCM 14929 / IAM 14863 / T)</name>
    <dbReference type="NCBI Taxonomy" id="292459"/>
    <lineage>
        <taxon>Bacteria</taxon>
        <taxon>Bacillati</taxon>
        <taxon>Bacillota</taxon>
        <taxon>Clostridia</taxon>
        <taxon>Eubacteriales</taxon>
        <taxon>Symbiobacteriaceae</taxon>
        <taxon>Symbiobacterium</taxon>
    </lineage>
</organism>
<accession>Q67PA9</accession>
<sequence>MKKGIAILGSTGSIGTQALDVIDHHPGRFRVVALAAGRQVERLAEQALRFRPALLSVADADAAAALRALLLAEAGDYRPEIAWGREGLIRAATHPESGLVLTSVVGAMGVEPTLAAIEAGKDIALANKETLVAAGELVTAAAQARGVKLLPVDSEHSAIFQSLAGADPGSVRRILLTASGGPFRGRKDLTGVTREEALRHPRWTMGAKVTIDSATLMNKALEMIEAHWLFGVPMEQIEVIVHPQSILHSAVEFCDGNIIAQLGPTDMRLPIQYALCYPERCRGFVEPLDLIALGALTFERPDEETFPSLRYARRAVTMGGTMPAVLNAANEVAVQRFLAGEIPFTGIFQLVAGVMDRHDPVQRPDLAAILAADRWARDAAREQPVRM</sequence>
<reference key="1">
    <citation type="journal article" date="2004" name="Nucleic Acids Res.">
        <title>Genome sequence of Symbiobacterium thermophilum, an uncultivable bacterium that depends on microbial commensalism.</title>
        <authorList>
            <person name="Ueda K."/>
            <person name="Yamashita A."/>
            <person name="Ishikawa J."/>
            <person name="Shimada M."/>
            <person name="Watsuji T."/>
            <person name="Morimura K."/>
            <person name="Ikeda H."/>
            <person name="Hattori M."/>
            <person name="Beppu T."/>
        </authorList>
    </citation>
    <scope>NUCLEOTIDE SEQUENCE [LARGE SCALE GENOMIC DNA]</scope>
    <source>
        <strain>DSM 24528 / JCM 14929 / IAM 14863 / T</strain>
    </source>
</reference>
<dbReference type="EC" id="1.1.1.267" evidence="1"/>
<dbReference type="EMBL" id="AP006840">
    <property type="protein sequence ID" value="BAD40484.1"/>
    <property type="molecule type" value="Genomic_DNA"/>
</dbReference>
<dbReference type="RefSeq" id="WP_011195629.1">
    <property type="nucleotide sequence ID" value="NC_006177.1"/>
</dbReference>
<dbReference type="SMR" id="Q67PA9"/>
<dbReference type="STRING" id="292459.STH1499"/>
<dbReference type="KEGG" id="sth:STH1499"/>
<dbReference type="eggNOG" id="COG0743">
    <property type="taxonomic scope" value="Bacteria"/>
</dbReference>
<dbReference type="HOGENOM" id="CLU_035714_4_0_9"/>
<dbReference type="OrthoDB" id="9806546at2"/>
<dbReference type="UniPathway" id="UPA00056">
    <property type="reaction ID" value="UER00092"/>
</dbReference>
<dbReference type="Proteomes" id="UP000000417">
    <property type="component" value="Chromosome"/>
</dbReference>
<dbReference type="GO" id="GO:0030604">
    <property type="term" value="F:1-deoxy-D-xylulose-5-phosphate reductoisomerase activity"/>
    <property type="evidence" value="ECO:0007669"/>
    <property type="project" value="UniProtKB-UniRule"/>
</dbReference>
<dbReference type="GO" id="GO:0030145">
    <property type="term" value="F:manganese ion binding"/>
    <property type="evidence" value="ECO:0007669"/>
    <property type="project" value="TreeGrafter"/>
</dbReference>
<dbReference type="GO" id="GO:0070402">
    <property type="term" value="F:NADPH binding"/>
    <property type="evidence" value="ECO:0007669"/>
    <property type="project" value="InterPro"/>
</dbReference>
<dbReference type="GO" id="GO:0051484">
    <property type="term" value="P:isopentenyl diphosphate biosynthetic process, methylerythritol 4-phosphate pathway involved in terpenoid biosynthetic process"/>
    <property type="evidence" value="ECO:0007669"/>
    <property type="project" value="TreeGrafter"/>
</dbReference>
<dbReference type="FunFam" id="3.40.50.720:FF:000045">
    <property type="entry name" value="1-deoxy-D-xylulose 5-phosphate reductoisomerase"/>
    <property type="match status" value="1"/>
</dbReference>
<dbReference type="Gene3D" id="1.10.1740.10">
    <property type="match status" value="1"/>
</dbReference>
<dbReference type="Gene3D" id="3.40.50.720">
    <property type="entry name" value="NAD(P)-binding Rossmann-like Domain"/>
    <property type="match status" value="1"/>
</dbReference>
<dbReference type="HAMAP" id="MF_00183">
    <property type="entry name" value="DXP_reductoisom"/>
    <property type="match status" value="1"/>
</dbReference>
<dbReference type="InterPro" id="IPR003821">
    <property type="entry name" value="DXP_reductoisomerase"/>
</dbReference>
<dbReference type="InterPro" id="IPR013644">
    <property type="entry name" value="DXP_reductoisomerase_C"/>
</dbReference>
<dbReference type="InterPro" id="IPR013512">
    <property type="entry name" value="DXP_reductoisomerase_N"/>
</dbReference>
<dbReference type="InterPro" id="IPR026877">
    <property type="entry name" value="DXPR_C"/>
</dbReference>
<dbReference type="InterPro" id="IPR036169">
    <property type="entry name" value="DXPR_C_sf"/>
</dbReference>
<dbReference type="InterPro" id="IPR036291">
    <property type="entry name" value="NAD(P)-bd_dom_sf"/>
</dbReference>
<dbReference type="NCBIfam" id="TIGR00243">
    <property type="entry name" value="Dxr"/>
    <property type="match status" value="1"/>
</dbReference>
<dbReference type="NCBIfam" id="NF009114">
    <property type="entry name" value="PRK12464.1"/>
    <property type="match status" value="1"/>
</dbReference>
<dbReference type="PANTHER" id="PTHR30525">
    <property type="entry name" value="1-DEOXY-D-XYLULOSE 5-PHOSPHATE REDUCTOISOMERASE"/>
    <property type="match status" value="1"/>
</dbReference>
<dbReference type="PANTHER" id="PTHR30525:SF0">
    <property type="entry name" value="1-DEOXY-D-XYLULOSE 5-PHOSPHATE REDUCTOISOMERASE, CHLOROPLASTIC"/>
    <property type="match status" value="1"/>
</dbReference>
<dbReference type="Pfam" id="PF08436">
    <property type="entry name" value="DXP_redisom_C"/>
    <property type="match status" value="1"/>
</dbReference>
<dbReference type="Pfam" id="PF02670">
    <property type="entry name" value="DXP_reductoisom"/>
    <property type="match status" value="1"/>
</dbReference>
<dbReference type="Pfam" id="PF13288">
    <property type="entry name" value="DXPR_C"/>
    <property type="match status" value="1"/>
</dbReference>
<dbReference type="PIRSF" id="PIRSF006205">
    <property type="entry name" value="Dxp_reductismrs"/>
    <property type="match status" value="1"/>
</dbReference>
<dbReference type="SUPFAM" id="SSF69055">
    <property type="entry name" value="1-deoxy-D-xylulose-5-phosphate reductoisomerase, C-terminal domain"/>
    <property type="match status" value="1"/>
</dbReference>
<dbReference type="SUPFAM" id="SSF55347">
    <property type="entry name" value="Glyceraldehyde-3-phosphate dehydrogenase-like, C-terminal domain"/>
    <property type="match status" value="1"/>
</dbReference>
<dbReference type="SUPFAM" id="SSF51735">
    <property type="entry name" value="NAD(P)-binding Rossmann-fold domains"/>
    <property type="match status" value="1"/>
</dbReference>
<protein>
    <recommendedName>
        <fullName evidence="1">1-deoxy-D-xylulose 5-phosphate reductoisomerase</fullName>
        <shortName evidence="1">DXP reductoisomerase</shortName>
        <ecNumber evidence="1">1.1.1.267</ecNumber>
    </recommendedName>
    <alternativeName>
        <fullName evidence="1">1-deoxyxylulose-5-phosphate reductoisomerase</fullName>
    </alternativeName>
    <alternativeName>
        <fullName evidence="1">2-C-methyl-D-erythritol 4-phosphate synthase</fullName>
    </alternativeName>
</protein>
<evidence type="ECO:0000255" key="1">
    <source>
        <dbReference type="HAMAP-Rule" id="MF_00183"/>
    </source>
</evidence>
<gene>
    <name evidence="1" type="primary">dxr</name>
    <name type="ordered locus">STH1499</name>
</gene>
<keyword id="KW-0414">Isoprene biosynthesis</keyword>
<keyword id="KW-0464">Manganese</keyword>
<keyword id="KW-0479">Metal-binding</keyword>
<keyword id="KW-0521">NADP</keyword>
<keyword id="KW-0560">Oxidoreductase</keyword>
<keyword id="KW-1185">Reference proteome</keyword>
<comment type="function">
    <text evidence="1">Catalyzes the NADPH-dependent rearrangement and reduction of 1-deoxy-D-xylulose-5-phosphate (DXP) to 2-C-methyl-D-erythritol 4-phosphate (MEP).</text>
</comment>
<comment type="catalytic activity">
    <reaction evidence="1">
        <text>2-C-methyl-D-erythritol 4-phosphate + NADP(+) = 1-deoxy-D-xylulose 5-phosphate + NADPH + H(+)</text>
        <dbReference type="Rhea" id="RHEA:13717"/>
        <dbReference type="ChEBI" id="CHEBI:15378"/>
        <dbReference type="ChEBI" id="CHEBI:57783"/>
        <dbReference type="ChEBI" id="CHEBI:57792"/>
        <dbReference type="ChEBI" id="CHEBI:58262"/>
        <dbReference type="ChEBI" id="CHEBI:58349"/>
        <dbReference type="EC" id="1.1.1.267"/>
    </reaction>
    <physiologicalReaction direction="right-to-left" evidence="1">
        <dbReference type="Rhea" id="RHEA:13719"/>
    </physiologicalReaction>
</comment>
<comment type="cofactor">
    <cofactor evidence="1">
        <name>Mg(2+)</name>
        <dbReference type="ChEBI" id="CHEBI:18420"/>
    </cofactor>
    <cofactor evidence="1">
        <name>Mn(2+)</name>
        <dbReference type="ChEBI" id="CHEBI:29035"/>
    </cofactor>
</comment>
<comment type="pathway">
    <text evidence="1">Isoprenoid biosynthesis; isopentenyl diphosphate biosynthesis via DXP pathway; isopentenyl diphosphate from 1-deoxy-D-xylulose 5-phosphate: step 1/6.</text>
</comment>
<comment type="similarity">
    <text evidence="1">Belongs to the DXR family.</text>
</comment>